<comment type="function">
    <text evidence="1">Catalyzes the thiamine diphosphate-dependent decarboxylation of 2-oxoglutarate and the subsequent addition of the resulting succinic semialdehyde-thiamine pyrophosphate anion to isochorismate to yield 2-succinyl-5-enolpyruvyl-6-hydroxy-3-cyclohexene-1-carboxylate (SEPHCHC).</text>
</comment>
<comment type="catalytic activity">
    <reaction evidence="1">
        <text>isochorismate + 2-oxoglutarate + H(+) = 5-enolpyruvoyl-6-hydroxy-2-succinyl-cyclohex-3-ene-1-carboxylate + CO2</text>
        <dbReference type="Rhea" id="RHEA:25593"/>
        <dbReference type="ChEBI" id="CHEBI:15378"/>
        <dbReference type="ChEBI" id="CHEBI:16526"/>
        <dbReference type="ChEBI" id="CHEBI:16810"/>
        <dbReference type="ChEBI" id="CHEBI:29780"/>
        <dbReference type="ChEBI" id="CHEBI:58818"/>
        <dbReference type="EC" id="2.2.1.9"/>
    </reaction>
</comment>
<comment type="cofactor">
    <cofactor evidence="1">
        <name>Mg(2+)</name>
        <dbReference type="ChEBI" id="CHEBI:18420"/>
    </cofactor>
    <cofactor evidence="1">
        <name>Mn(2+)</name>
        <dbReference type="ChEBI" id="CHEBI:29035"/>
    </cofactor>
</comment>
<comment type="cofactor">
    <cofactor evidence="1">
        <name>thiamine diphosphate</name>
        <dbReference type="ChEBI" id="CHEBI:58937"/>
    </cofactor>
    <text evidence="1">Binds 1 thiamine pyrophosphate per subunit.</text>
</comment>
<comment type="pathway">
    <text evidence="1">Quinol/quinone metabolism; 1,4-dihydroxy-2-naphthoate biosynthesis; 1,4-dihydroxy-2-naphthoate from chorismate: step 2/7.</text>
</comment>
<comment type="pathway">
    <text evidence="1">Quinol/quinone metabolism; menaquinone biosynthesis.</text>
</comment>
<comment type="subunit">
    <text evidence="1">Homodimer.</text>
</comment>
<comment type="similarity">
    <text evidence="1">Belongs to the TPP enzyme family. MenD subfamily.</text>
</comment>
<evidence type="ECO:0000255" key="1">
    <source>
        <dbReference type="HAMAP-Rule" id="MF_01659"/>
    </source>
</evidence>
<keyword id="KW-0460">Magnesium</keyword>
<keyword id="KW-0464">Manganese</keyword>
<keyword id="KW-0474">Menaquinone biosynthesis</keyword>
<keyword id="KW-0479">Metal-binding</keyword>
<keyword id="KW-1185">Reference proteome</keyword>
<keyword id="KW-0786">Thiamine pyrophosphate</keyword>
<keyword id="KW-0808">Transferase</keyword>
<sequence length="589" mass="61438">MSSDANLNVLWARALLEELVRGGVRHAVVCPGSRSSPLALACAGTEGLRTWSVIDERSAGFFALGLAKQSRAPAVVVATSGTAGAHFYPAVIEAALSHVPLVVLTADRPLELQGWGAPQTVPQARFFGEHARFYADLGQPEAHDAALIHMRATVARAVVSAWRAPRGAVQLNVPFREPLAPIAEPFPEASLSALAKSGRAGAPLTRIVPPEPVPDASTLDEVRRRIAATTRGVIVCGPRDEMDGFAAAISALSQATGYPVLAESTSQARYGGGPLTLSYYDAMLRHAPFAKAHRPELVLRFGGGLTPKVPQQWLDGSGADTVLFSDGGGLFDPAHRASTVVEGSAVAACEALTRGLARGVGAWARGFLAAEQRVRTALEAAFAEQPDVLSEPRIAREVVAALPAGAPLFVSSSMPIRDLDAFAPAGTVPLRVLANRGANGIDGIVSSALGMAAAAGRSAVLLTGDLALLHDVGAFVTASRTRVPLTVVAVNNDGGGIFSFLPIAQVAPRDTFETLFGTPHGVDLSHAAALGGARLHRPETPVALRSAVREGLEGGLHLVEVRVDRNANVDEHRRLFARMAASLGEGPWA</sequence>
<name>MEND_MYXXD</name>
<proteinExistence type="inferred from homology"/>
<gene>
    <name evidence="1" type="primary">menD</name>
    <name type="ordered locus">MXAN_3528</name>
</gene>
<dbReference type="EC" id="2.2.1.9" evidence="1"/>
<dbReference type="EMBL" id="CP000113">
    <property type="protein sequence ID" value="ABF88383.1"/>
    <property type="molecule type" value="Genomic_DNA"/>
</dbReference>
<dbReference type="RefSeq" id="WP_011553558.1">
    <property type="nucleotide sequence ID" value="NC_008095.1"/>
</dbReference>
<dbReference type="SMR" id="Q1D6K1"/>
<dbReference type="STRING" id="246197.MXAN_3528"/>
<dbReference type="EnsemblBacteria" id="ABF88383">
    <property type="protein sequence ID" value="ABF88383"/>
    <property type="gene ID" value="MXAN_3528"/>
</dbReference>
<dbReference type="GeneID" id="41360872"/>
<dbReference type="KEGG" id="mxa:MXAN_3528"/>
<dbReference type="eggNOG" id="COG1165">
    <property type="taxonomic scope" value="Bacteria"/>
</dbReference>
<dbReference type="HOGENOM" id="CLU_006051_3_0_7"/>
<dbReference type="OrthoDB" id="9791859at2"/>
<dbReference type="UniPathway" id="UPA00079"/>
<dbReference type="UniPathway" id="UPA01057">
    <property type="reaction ID" value="UER00164"/>
</dbReference>
<dbReference type="Proteomes" id="UP000002402">
    <property type="component" value="Chromosome"/>
</dbReference>
<dbReference type="GO" id="GO:0070204">
    <property type="term" value="F:2-succinyl-5-enolpyruvyl-6-hydroxy-3-cyclohexene-1-carboxylic-acid synthase activity"/>
    <property type="evidence" value="ECO:0007669"/>
    <property type="project" value="UniProtKB-UniRule"/>
</dbReference>
<dbReference type="GO" id="GO:0000287">
    <property type="term" value="F:magnesium ion binding"/>
    <property type="evidence" value="ECO:0007669"/>
    <property type="project" value="UniProtKB-UniRule"/>
</dbReference>
<dbReference type="GO" id="GO:0030145">
    <property type="term" value="F:manganese ion binding"/>
    <property type="evidence" value="ECO:0007669"/>
    <property type="project" value="UniProtKB-UniRule"/>
</dbReference>
<dbReference type="GO" id="GO:0030976">
    <property type="term" value="F:thiamine pyrophosphate binding"/>
    <property type="evidence" value="ECO:0007669"/>
    <property type="project" value="UniProtKB-UniRule"/>
</dbReference>
<dbReference type="GO" id="GO:0009234">
    <property type="term" value="P:menaquinone biosynthetic process"/>
    <property type="evidence" value="ECO:0007669"/>
    <property type="project" value="UniProtKB-UniRule"/>
</dbReference>
<dbReference type="CDD" id="cd07037">
    <property type="entry name" value="TPP_PYR_MenD"/>
    <property type="match status" value="1"/>
</dbReference>
<dbReference type="CDD" id="cd02009">
    <property type="entry name" value="TPP_SHCHC_synthase"/>
    <property type="match status" value="1"/>
</dbReference>
<dbReference type="Gene3D" id="3.40.50.970">
    <property type="match status" value="2"/>
</dbReference>
<dbReference type="Gene3D" id="3.40.50.1220">
    <property type="entry name" value="TPP-binding domain"/>
    <property type="match status" value="1"/>
</dbReference>
<dbReference type="HAMAP" id="MF_01659">
    <property type="entry name" value="MenD"/>
    <property type="match status" value="1"/>
</dbReference>
<dbReference type="InterPro" id="IPR029035">
    <property type="entry name" value="DHS-like_NAD/FAD-binding_dom"/>
</dbReference>
<dbReference type="InterPro" id="IPR004433">
    <property type="entry name" value="MenaQ_synth_MenD"/>
</dbReference>
<dbReference type="InterPro" id="IPR032264">
    <property type="entry name" value="MenD_middle"/>
</dbReference>
<dbReference type="InterPro" id="IPR029061">
    <property type="entry name" value="THDP-binding"/>
</dbReference>
<dbReference type="InterPro" id="IPR012001">
    <property type="entry name" value="Thiamin_PyroP_enz_TPP-bd_dom"/>
</dbReference>
<dbReference type="InterPro" id="IPR011766">
    <property type="entry name" value="TPP_enzyme_TPP-bd"/>
</dbReference>
<dbReference type="NCBIfam" id="TIGR00173">
    <property type="entry name" value="menD"/>
    <property type="match status" value="1"/>
</dbReference>
<dbReference type="PANTHER" id="PTHR42916">
    <property type="entry name" value="2-SUCCINYL-5-ENOLPYRUVYL-6-HYDROXY-3-CYCLOHEXENE-1-CARBOXYLATE SYNTHASE"/>
    <property type="match status" value="1"/>
</dbReference>
<dbReference type="PANTHER" id="PTHR42916:SF1">
    <property type="entry name" value="PROTEIN PHYLLO, CHLOROPLASTIC"/>
    <property type="match status" value="1"/>
</dbReference>
<dbReference type="Pfam" id="PF02775">
    <property type="entry name" value="TPP_enzyme_C"/>
    <property type="match status" value="1"/>
</dbReference>
<dbReference type="Pfam" id="PF16582">
    <property type="entry name" value="TPP_enzyme_M_2"/>
    <property type="match status" value="1"/>
</dbReference>
<dbReference type="Pfam" id="PF02776">
    <property type="entry name" value="TPP_enzyme_N"/>
    <property type="match status" value="1"/>
</dbReference>
<dbReference type="PIRSF" id="PIRSF004983">
    <property type="entry name" value="MenD"/>
    <property type="match status" value="1"/>
</dbReference>
<dbReference type="SUPFAM" id="SSF52467">
    <property type="entry name" value="DHS-like NAD/FAD-binding domain"/>
    <property type="match status" value="1"/>
</dbReference>
<dbReference type="SUPFAM" id="SSF52518">
    <property type="entry name" value="Thiamin diphosphate-binding fold (THDP-binding)"/>
    <property type="match status" value="2"/>
</dbReference>
<accession>Q1D6K1</accession>
<protein>
    <recommendedName>
        <fullName evidence="1">2-succinyl-5-enolpyruvyl-6-hydroxy-3-cyclohexene-1-carboxylate synthase</fullName>
        <shortName evidence="1">SEPHCHC synthase</shortName>
        <ecNumber evidence="1">2.2.1.9</ecNumber>
    </recommendedName>
    <alternativeName>
        <fullName evidence="1">Menaquinone biosynthesis protein MenD</fullName>
    </alternativeName>
</protein>
<reference key="1">
    <citation type="journal article" date="2006" name="Proc. Natl. Acad. Sci. U.S.A.">
        <title>Evolution of sensory complexity recorded in a myxobacterial genome.</title>
        <authorList>
            <person name="Goldman B.S."/>
            <person name="Nierman W.C."/>
            <person name="Kaiser D."/>
            <person name="Slater S.C."/>
            <person name="Durkin A.S."/>
            <person name="Eisen J.A."/>
            <person name="Ronning C.M."/>
            <person name="Barbazuk W.B."/>
            <person name="Blanchard M."/>
            <person name="Field C."/>
            <person name="Halling C."/>
            <person name="Hinkle G."/>
            <person name="Iartchuk O."/>
            <person name="Kim H.S."/>
            <person name="Mackenzie C."/>
            <person name="Madupu R."/>
            <person name="Miller N."/>
            <person name="Shvartsbeyn A."/>
            <person name="Sullivan S.A."/>
            <person name="Vaudin M."/>
            <person name="Wiegand R."/>
            <person name="Kaplan H.B."/>
        </authorList>
    </citation>
    <scope>NUCLEOTIDE SEQUENCE [LARGE SCALE GENOMIC DNA]</scope>
    <source>
        <strain>DK1622</strain>
    </source>
</reference>
<feature type="chain" id="PRO_0000341789" description="2-succinyl-5-enolpyruvyl-6-hydroxy-3-cyclohexene-1-carboxylate synthase">
    <location>
        <begin position="1"/>
        <end position="589"/>
    </location>
</feature>
<organism>
    <name type="scientific">Myxococcus xanthus (strain DK1622)</name>
    <dbReference type="NCBI Taxonomy" id="246197"/>
    <lineage>
        <taxon>Bacteria</taxon>
        <taxon>Pseudomonadati</taxon>
        <taxon>Myxococcota</taxon>
        <taxon>Myxococcia</taxon>
        <taxon>Myxococcales</taxon>
        <taxon>Cystobacterineae</taxon>
        <taxon>Myxococcaceae</taxon>
        <taxon>Myxococcus</taxon>
    </lineage>
</organism>